<proteinExistence type="evidence at protein level"/>
<dbReference type="EMBL" id="U39072">
    <property type="protein sequence ID" value="AAA91165.1"/>
    <property type="molecule type" value="mRNA"/>
</dbReference>
<dbReference type="EMBL" id="AC006264">
    <property type="protein sequence ID" value="AAD29810.1"/>
    <property type="molecule type" value="Genomic_DNA"/>
</dbReference>
<dbReference type="EMBL" id="CP002685">
    <property type="protein sequence ID" value="AEC07117.1"/>
    <property type="molecule type" value="Genomic_DNA"/>
</dbReference>
<dbReference type="EMBL" id="AY057693">
    <property type="protein sequence ID" value="AAL15323.1"/>
    <property type="molecule type" value="mRNA"/>
</dbReference>
<dbReference type="EMBL" id="BT021142">
    <property type="protein sequence ID" value="AAX22277.1"/>
    <property type="molecule type" value="mRNA"/>
</dbReference>
<dbReference type="PIR" id="F84596">
    <property type="entry name" value="F84596"/>
</dbReference>
<dbReference type="RefSeq" id="NP_179702.1">
    <property type="nucleotide sequence ID" value="NM_127676.3"/>
</dbReference>
<dbReference type="SMR" id="Q38896"/>
<dbReference type="BioGRID" id="1994">
    <property type="interactions" value="9"/>
</dbReference>
<dbReference type="FunCoup" id="Q38896">
    <property type="interactions" value="49"/>
</dbReference>
<dbReference type="IntAct" id="Q38896">
    <property type="interactions" value="6"/>
</dbReference>
<dbReference type="STRING" id="3702.Q38896"/>
<dbReference type="iPTMnet" id="Q38896"/>
<dbReference type="PaxDb" id="3702-AT2G21060.1"/>
<dbReference type="ProteomicsDB" id="224430"/>
<dbReference type="EnsemblPlants" id="AT2G21060.1">
    <property type="protein sequence ID" value="AT2G21060.1"/>
    <property type="gene ID" value="AT2G21060"/>
</dbReference>
<dbReference type="GeneID" id="816641"/>
<dbReference type="Gramene" id="AT2G21060.1">
    <property type="protein sequence ID" value="AT2G21060.1"/>
    <property type="gene ID" value="AT2G21060"/>
</dbReference>
<dbReference type="KEGG" id="ath:AT2G21060"/>
<dbReference type="Araport" id="AT2G21060"/>
<dbReference type="TAIR" id="AT2G21060">
    <property type="gene designation" value="GRP2B"/>
</dbReference>
<dbReference type="eggNOG" id="KOG3070">
    <property type="taxonomic scope" value="Eukaryota"/>
</dbReference>
<dbReference type="HOGENOM" id="CLU_089169_3_0_1"/>
<dbReference type="InParanoid" id="Q38896"/>
<dbReference type="OMA" id="GQTGHMA"/>
<dbReference type="PhylomeDB" id="Q38896"/>
<dbReference type="PRO" id="PR:Q38896"/>
<dbReference type="Proteomes" id="UP000006548">
    <property type="component" value="Chromosome 2"/>
</dbReference>
<dbReference type="ExpressionAtlas" id="Q38896">
    <property type="expression patterns" value="baseline and differential"/>
</dbReference>
<dbReference type="GO" id="GO:0005829">
    <property type="term" value="C:cytosol"/>
    <property type="evidence" value="ECO:0000314"/>
    <property type="project" value="TAIR"/>
</dbReference>
<dbReference type="GO" id="GO:0005730">
    <property type="term" value="C:nucleolus"/>
    <property type="evidence" value="ECO:0007669"/>
    <property type="project" value="UniProtKB-SubCell"/>
</dbReference>
<dbReference type="GO" id="GO:0005634">
    <property type="term" value="C:nucleus"/>
    <property type="evidence" value="ECO:0000314"/>
    <property type="project" value="TAIR"/>
</dbReference>
<dbReference type="GO" id="GO:0003677">
    <property type="term" value="F:DNA binding"/>
    <property type="evidence" value="ECO:0007669"/>
    <property type="project" value="UniProtKB-KW"/>
</dbReference>
<dbReference type="GO" id="GO:0003729">
    <property type="term" value="F:mRNA binding"/>
    <property type="evidence" value="ECO:0000314"/>
    <property type="project" value="TAIR"/>
</dbReference>
<dbReference type="GO" id="GO:0008270">
    <property type="term" value="F:zinc ion binding"/>
    <property type="evidence" value="ECO:0007669"/>
    <property type="project" value="UniProtKB-KW"/>
</dbReference>
<dbReference type="GO" id="GO:0009793">
    <property type="term" value="P:embryo development ending in seed dormancy"/>
    <property type="evidence" value="ECO:0000315"/>
    <property type="project" value="TAIR"/>
</dbReference>
<dbReference type="GO" id="GO:0010154">
    <property type="term" value="P:fruit development"/>
    <property type="evidence" value="ECO:0000315"/>
    <property type="project" value="TAIR"/>
</dbReference>
<dbReference type="GO" id="GO:0009409">
    <property type="term" value="P:response to cold"/>
    <property type="evidence" value="ECO:0000270"/>
    <property type="project" value="UniProtKB"/>
</dbReference>
<dbReference type="CDD" id="cd04458">
    <property type="entry name" value="CSP_CDS"/>
    <property type="match status" value="1"/>
</dbReference>
<dbReference type="FunFam" id="2.40.50.140:FF:000382">
    <property type="entry name" value="Cold shock protein 1"/>
    <property type="match status" value="1"/>
</dbReference>
<dbReference type="Gene3D" id="2.40.50.140">
    <property type="entry name" value="Nucleic acid-binding proteins"/>
    <property type="match status" value="1"/>
</dbReference>
<dbReference type="Gene3D" id="4.10.60.10">
    <property type="entry name" value="Zinc finger, CCHC-type"/>
    <property type="match status" value="2"/>
</dbReference>
<dbReference type="InterPro" id="IPR011129">
    <property type="entry name" value="CSD"/>
</dbReference>
<dbReference type="InterPro" id="IPR019844">
    <property type="entry name" value="CSD_CS"/>
</dbReference>
<dbReference type="InterPro" id="IPR002059">
    <property type="entry name" value="CSP_DNA-bd"/>
</dbReference>
<dbReference type="InterPro" id="IPR012340">
    <property type="entry name" value="NA-bd_OB-fold"/>
</dbReference>
<dbReference type="InterPro" id="IPR001878">
    <property type="entry name" value="Znf_CCHC"/>
</dbReference>
<dbReference type="InterPro" id="IPR036875">
    <property type="entry name" value="Znf_CCHC_sf"/>
</dbReference>
<dbReference type="PANTHER" id="PTHR46565">
    <property type="entry name" value="COLD SHOCK DOMAIN PROTEIN 2"/>
    <property type="match status" value="1"/>
</dbReference>
<dbReference type="PANTHER" id="PTHR46565:SF20">
    <property type="entry name" value="COLD SHOCK DOMAIN-CONTAINING PROTEIN 4"/>
    <property type="match status" value="1"/>
</dbReference>
<dbReference type="Pfam" id="PF00313">
    <property type="entry name" value="CSD"/>
    <property type="match status" value="1"/>
</dbReference>
<dbReference type="Pfam" id="PF00098">
    <property type="entry name" value="zf-CCHC"/>
    <property type="match status" value="2"/>
</dbReference>
<dbReference type="PRINTS" id="PR00050">
    <property type="entry name" value="COLDSHOCK"/>
</dbReference>
<dbReference type="SMART" id="SM00357">
    <property type="entry name" value="CSP"/>
    <property type="match status" value="1"/>
</dbReference>
<dbReference type="SMART" id="SM00343">
    <property type="entry name" value="ZnF_C2HC"/>
    <property type="match status" value="2"/>
</dbReference>
<dbReference type="SUPFAM" id="SSF50249">
    <property type="entry name" value="Nucleic acid-binding proteins"/>
    <property type="match status" value="1"/>
</dbReference>
<dbReference type="SUPFAM" id="SSF57756">
    <property type="entry name" value="Retrovirus zinc finger-like domains"/>
    <property type="match status" value="2"/>
</dbReference>
<dbReference type="PROSITE" id="PS00352">
    <property type="entry name" value="CSD_1"/>
    <property type="match status" value="1"/>
</dbReference>
<dbReference type="PROSITE" id="PS51857">
    <property type="entry name" value="CSD_2"/>
    <property type="match status" value="1"/>
</dbReference>
<dbReference type="PROSITE" id="PS50158">
    <property type="entry name" value="ZF_CCHC"/>
    <property type="match status" value="2"/>
</dbReference>
<reference key="1">
    <citation type="online journal article" date="1995" name="Plant Gene Register">
        <title>Arabidopsis AtGRP2b, a glycine-rich protein containing multiple nucleic acid-binding motifs.</title>
        <authorList>
            <person name="van Nocker S."/>
            <person name="Vierstra R.D."/>
        </authorList>
        <locator>PGR95-128</locator>
    </citation>
    <scope>NUCLEOTIDE SEQUENCE [MRNA]</scope>
    <source>
        <strain>cv. Columbia</strain>
    </source>
</reference>
<reference key="2">
    <citation type="journal article" date="1999" name="Nature">
        <title>Sequence and analysis of chromosome 2 of the plant Arabidopsis thaliana.</title>
        <authorList>
            <person name="Lin X."/>
            <person name="Kaul S."/>
            <person name="Rounsley S.D."/>
            <person name="Shea T.P."/>
            <person name="Benito M.-I."/>
            <person name="Town C.D."/>
            <person name="Fujii C.Y."/>
            <person name="Mason T.M."/>
            <person name="Bowman C.L."/>
            <person name="Barnstead M.E."/>
            <person name="Feldblyum T.V."/>
            <person name="Buell C.R."/>
            <person name="Ketchum K.A."/>
            <person name="Lee J.J."/>
            <person name="Ronning C.M."/>
            <person name="Koo H.L."/>
            <person name="Moffat K.S."/>
            <person name="Cronin L.A."/>
            <person name="Shen M."/>
            <person name="Pai G."/>
            <person name="Van Aken S."/>
            <person name="Umayam L."/>
            <person name="Tallon L.J."/>
            <person name="Gill J.E."/>
            <person name="Adams M.D."/>
            <person name="Carrera A.J."/>
            <person name="Creasy T.H."/>
            <person name="Goodman H.M."/>
            <person name="Somerville C.R."/>
            <person name="Copenhaver G.P."/>
            <person name="Preuss D."/>
            <person name="Nierman W.C."/>
            <person name="White O."/>
            <person name="Eisen J.A."/>
            <person name="Salzberg S.L."/>
            <person name="Fraser C.M."/>
            <person name="Venter J.C."/>
        </authorList>
    </citation>
    <scope>NUCLEOTIDE SEQUENCE [LARGE SCALE GENOMIC DNA]</scope>
    <source>
        <strain>cv. Columbia</strain>
    </source>
</reference>
<reference key="3">
    <citation type="journal article" date="2017" name="Plant J.">
        <title>Araport11: a complete reannotation of the Arabidopsis thaliana reference genome.</title>
        <authorList>
            <person name="Cheng C.Y."/>
            <person name="Krishnakumar V."/>
            <person name="Chan A.P."/>
            <person name="Thibaud-Nissen F."/>
            <person name="Schobel S."/>
            <person name="Town C.D."/>
        </authorList>
    </citation>
    <scope>GENOME REANNOTATION</scope>
    <source>
        <strain>cv. Columbia</strain>
    </source>
</reference>
<reference key="4">
    <citation type="journal article" date="2003" name="Science">
        <title>Empirical analysis of transcriptional activity in the Arabidopsis genome.</title>
        <authorList>
            <person name="Yamada K."/>
            <person name="Lim J."/>
            <person name="Dale J.M."/>
            <person name="Chen H."/>
            <person name="Shinn P."/>
            <person name="Palm C.J."/>
            <person name="Southwick A.M."/>
            <person name="Wu H.C."/>
            <person name="Kim C.J."/>
            <person name="Nguyen M."/>
            <person name="Pham P.K."/>
            <person name="Cheuk R.F."/>
            <person name="Karlin-Newmann G."/>
            <person name="Liu S.X."/>
            <person name="Lam B."/>
            <person name="Sakano H."/>
            <person name="Wu T."/>
            <person name="Yu G."/>
            <person name="Miranda M."/>
            <person name="Quach H.L."/>
            <person name="Tripp M."/>
            <person name="Chang C.H."/>
            <person name="Lee J.M."/>
            <person name="Toriumi M.J."/>
            <person name="Chan M.M."/>
            <person name="Tang C.C."/>
            <person name="Onodera C.S."/>
            <person name="Deng J.M."/>
            <person name="Akiyama K."/>
            <person name="Ansari Y."/>
            <person name="Arakawa T."/>
            <person name="Banh J."/>
            <person name="Banno F."/>
            <person name="Bowser L."/>
            <person name="Brooks S.Y."/>
            <person name="Carninci P."/>
            <person name="Chao Q."/>
            <person name="Choy N."/>
            <person name="Enju A."/>
            <person name="Goldsmith A.D."/>
            <person name="Gurjal M."/>
            <person name="Hansen N.F."/>
            <person name="Hayashizaki Y."/>
            <person name="Johnson-Hopson C."/>
            <person name="Hsuan V.W."/>
            <person name="Iida K."/>
            <person name="Karnes M."/>
            <person name="Khan S."/>
            <person name="Koesema E."/>
            <person name="Ishida J."/>
            <person name="Jiang P.X."/>
            <person name="Jones T."/>
            <person name="Kawai J."/>
            <person name="Kamiya A."/>
            <person name="Meyers C."/>
            <person name="Nakajima M."/>
            <person name="Narusaka M."/>
            <person name="Seki M."/>
            <person name="Sakurai T."/>
            <person name="Satou M."/>
            <person name="Tamse R."/>
            <person name="Vaysberg M."/>
            <person name="Wallender E.K."/>
            <person name="Wong C."/>
            <person name="Yamamura Y."/>
            <person name="Yuan S."/>
            <person name="Shinozaki K."/>
            <person name="Davis R.W."/>
            <person name="Theologis A."/>
            <person name="Ecker J.R."/>
        </authorList>
    </citation>
    <scope>NUCLEOTIDE SEQUENCE [LARGE SCALE MRNA]</scope>
    <source>
        <strain>cv. Columbia</strain>
    </source>
</reference>
<reference key="5">
    <citation type="submission" date="2005-03" db="EMBL/GenBank/DDBJ databases">
        <title>Arabidopsis ORF clones.</title>
        <authorList>
            <person name="Cheuk R.F."/>
            <person name="Chen H."/>
            <person name="Kim C.J."/>
            <person name="Shinn P."/>
            <person name="Ecker J.R."/>
        </authorList>
    </citation>
    <scope>NUCLEOTIDE SEQUENCE [LARGE SCALE MRNA]</scope>
    <source>
        <strain>cv. Columbia</strain>
    </source>
</reference>
<reference key="6">
    <citation type="journal article" date="2003" name="Plant Physiol.">
        <title>Conservation of the cold shock domain protein family in plants.</title>
        <authorList>
            <person name="Karlson D."/>
            <person name="Imai R."/>
        </authorList>
    </citation>
    <scope>INDUCTION BY COLD</scope>
    <scope>GENE FAMILY</scope>
</reference>
<reference key="7">
    <citation type="journal article" date="2009" name="J. Exp. Bot.">
        <title>Arabidopsis cold shock domain proteins: relationships to floral and silique development.</title>
        <authorList>
            <person name="Nakaminami K."/>
            <person name="Hill K."/>
            <person name="Perry S.E."/>
            <person name="Sentoku N."/>
            <person name="Long J.A."/>
            <person name="Karlson D.T."/>
        </authorList>
    </citation>
    <scope>FUNCTION</scope>
    <scope>TISSUE SPECIFICITY</scope>
    <scope>DEVELOPMENTAL STAGE</scope>
    <scope>GENE FAMILY</scope>
    <scope>NOMENCLATURE</scope>
    <source>
        <strain>cv. Columbia</strain>
        <strain>cv. Landsberg erecta</strain>
    </source>
</reference>
<reference key="8">
    <citation type="journal article" date="2011" name="J. Exp. Bot.">
        <title>Overexpression of AtCSP4 affects late stages of embryo development in Arabidopsis.</title>
        <authorList>
            <person name="Yang Y."/>
            <person name="Karlson D.T."/>
        </authorList>
    </citation>
    <scope>FUNCTION</scope>
    <scope>TISSUE SPECIFICITY</scope>
    <scope>SUBCELLULAR LOCATION</scope>
    <source>
        <strain>cv. Columbia</strain>
    </source>
</reference>
<reference key="9">
    <citation type="journal article" date="2012" name="Mol. Cell. Proteomics">
        <title>Comparative large-scale characterisation of plant vs. mammal proteins reveals similar and idiosyncratic N-alpha acetylation features.</title>
        <authorList>
            <person name="Bienvenut W.V."/>
            <person name="Sumpton D."/>
            <person name="Martinez A."/>
            <person name="Lilla S."/>
            <person name="Espagne C."/>
            <person name="Meinnel T."/>
            <person name="Giglione C."/>
        </authorList>
    </citation>
    <scope>ACETYLATION [LARGE SCALE ANALYSIS] AT SER-2</scope>
    <scope>CLEAVAGE OF INITIATOR METHIONINE [LARGE SCALE ANALYSIS]</scope>
    <scope>IDENTIFICATION BY MASS SPECTROMETRY [LARGE SCALE ANALYSIS]</scope>
</reference>
<keyword id="KW-0007">Acetylation</keyword>
<keyword id="KW-0143">Chaperone</keyword>
<keyword id="KW-0963">Cytoplasm</keyword>
<keyword id="KW-0238">DNA-binding</keyword>
<keyword id="KW-0479">Metal-binding</keyword>
<keyword id="KW-0539">Nucleus</keyword>
<keyword id="KW-1185">Reference proteome</keyword>
<keyword id="KW-0677">Repeat</keyword>
<keyword id="KW-0694">RNA-binding</keyword>
<keyword id="KW-0862">Zinc</keyword>
<keyword id="KW-0863">Zinc-finger</keyword>
<protein>
    <recommendedName>
        <fullName>Cold shock domain-containing protein 4</fullName>
        <shortName>AtCSP4</shortName>
    </recommendedName>
    <alternativeName>
        <fullName>Glycine-rich protein 2b</fullName>
        <shortName>AtGRP2b</shortName>
    </alternativeName>
</protein>
<comment type="function">
    <text evidence="1 5 6">Chaperone that binds to and unwinds RNA and both single-stranded DNA and double-stranded DNA (ssDNA and dsDNA DNA) (By similarity). Regulates the flowering transition and flower and seed development, particularly at late stages of embryo development, through regulation of gene expression (including MEA, FIS2, AP1, CAL, AG and SHP2).</text>
</comment>
<comment type="subcellular location">
    <subcellularLocation>
        <location evidence="6">Cytoplasm</location>
    </subcellularLocation>
    <subcellularLocation>
        <location evidence="1">Nucleus</location>
        <location evidence="1">Nucleolus</location>
    </subcellularLocation>
    <subcellularLocation>
        <location evidence="6">Nucleus</location>
    </subcellularLocation>
</comment>
<comment type="tissue specificity">
    <text evidence="5 6">Mostly expressed in shoot apices and siliques, and, to a lower extent, in roots, cotyledons, stems, shoots, leaves, floral buds and flowers. Present in shoot apical meristems and siliques (at protein level). Very low levels are observed in cv. Landsberg erecta compared to cv. Columbia (PubMed:19269998).</text>
</comment>
<comment type="developmental stage">
    <text evidence="5">Accumulates in floral buds, flowers, developing embryos during an early stage of silique development.</text>
</comment>
<comment type="induction">
    <text evidence="4">Down-regulated during cold acclimation. Accumulation during silique development is AGL15-dependent.</text>
</comment>
<comment type="similarity">
    <text evidence="7">Belongs to the cold shock protein (CSP) family.</text>
</comment>
<accession>Q38896</accession>
<accession>Q5BIT2</accession>
<feature type="initiator methionine" description="Removed" evidence="8">
    <location>
        <position position="1"/>
    </location>
</feature>
<feature type="chain" id="PRO_0000100354" description="Cold shock domain-containing protein 4">
    <location>
        <begin position="2"/>
        <end position="201"/>
    </location>
</feature>
<feature type="domain" description="CSD">
    <location>
        <begin position="14"/>
        <end position="81"/>
    </location>
</feature>
<feature type="zinc finger region" description="CCHC-type 1" evidence="2">
    <location>
        <begin position="136"/>
        <end position="153"/>
    </location>
</feature>
<feature type="zinc finger region" description="CCHC-type 2" evidence="2">
    <location>
        <begin position="180"/>
        <end position="197"/>
    </location>
</feature>
<feature type="region of interest" description="Disordered" evidence="3">
    <location>
        <begin position="66"/>
        <end position="109"/>
    </location>
</feature>
<feature type="compositionally biased region" description="Gly residues" evidence="3">
    <location>
        <begin position="89"/>
        <end position="109"/>
    </location>
</feature>
<feature type="modified residue" description="N-acetylserine" evidence="8">
    <location>
        <position position="2"/>
    </location>
</feature>
<evidence type="ECO:0000250" key="1"/>
<evidence type="ECO:0000255" key="2">
    <source>
        <dbReference type="PROSITE-ProRule" id="PRU00047"/>
    </source>
</evidence>
<evidence type="ECO:0000256" key="3">
    <source>
        <dbReference type="SAM" id="MobiDB-lite"/>
    </source>
</evidence>
<evidence type="ECO:0000269" key="4">
    <source>
    </source>
</evidence>
<evidence type="ECO:0000269" key="5">
    <source>
    </source>
</evidence>
<evidence type="ECO:0000269" key="6">
    <source>
    </source>
</evidence>
<evidence type="ECO:0000305" key="7"/>
<evidence type="ECO:0007744" key="8">
    <source>
    </source>
</evidence>
<sequence>MSGGGDVNMSGGDRRKGTVKWFDTQKGFGFITPSDGGDDLFVHQSSIRSEGFRSLAAEESVEFDVEVDNSGRPKAIEVSGPDGAPVQGNSGGGGSSGGRGGFGGGGGRGGGRGGGSYGGGYGGRGSGGRGGGGGDNSCFKCGEPGHMARECSQGGGGYSGGGGGGRYGSGGGGGGGGGGLSCYSCGESGHFARDCTSGGAR</sequence>
<gene>
    <name type="primary">CSP4</name>
    <name type="synonym">GRP2B</name>
    <name type="ordered locus">At2g21060</name>
    <name type="ORF">F26H11.18</name>
</gene>
<organism>
    <name type="scientific">Arabidopsis thaliana</name>
    <name type="common">Mouse-ear cress</name>
    <dbReference type="NCBI Taxonomy" id="3702"/>
    <lineage>
        <taxon>Eukaryota</taxon>
        <taxon>Viridiplantae</taxon>
        <taxon>Streptophyta</taxon>
        <taxon>Embryophyta</taxon>
        <taxon>Tracheophyta</taxon>
        <taxon>Spermatophyta</taxon>
        <taxon>Magnoliopsida</taxon>
        <taxon>eudicotyledons</taxon>
        <taxon>Gunneridae</taxon>
        <taxon>Pentapetalae</taxon>
        <taxon>rosids</taxon>
        <taxon>malvids</taxon>
        <taxon>Brassicales</taxon>
        <taxon>Brassicaceae</taxon>
        <taxon>Camelineae</taxon>
        <taxon>Arabidopsis</taxon>
    </lineage>
</organism>
<name>CSP4_ARATH</name>